<accession>B9JLT7</accession>
<feature type="chain" id="PRO_0000402709" description="3-aminoacrylate deaminase RutC">
    <location>
        <begin position="1"/>
        <end position="129"/>
    </location>
</feature>
<proteinExistence type="inferred from homology"/>
<dbReference type="EC" id="3.5.-.-" evidence="1"/>
<dbReference type="EMBL" id="CP000629">
    <property type="protein sequence ID" value="ACM28651.1"/>
    <property type="molecule type" value="Genomic_DNA"/>
</dbReference>
<dbReference type="RefSeq" id="WP_007688838.1">
    <property type="nucleotide sequence ID" value="NC_011983.1"/>
</dbReference>
<dbReference type="SMR" id="B9JLT7"/>
<dbReference type="STRING" id="311403.Arad_7071"/>
<dbReference type="GeneID" id="86850963"/>
<dbReference type="KEGG" id="ara:Arad_7071"/>
<dbReference type="eggNOG" id="COG0251">
    <property type="taxonomic scope" value="Bacteria"/>
</dbReference>
<dbReference type="HOGENOM" id="CLU_100715_7_3_5"/>
<dbReference type="Proteomes" id="UP000001600">
    <property type="component" value="Chromosome 2"/>
</dbReference>
<dbReference type="GO" id="GO:0005829">
    <property type="term" value="C:cytosol"/>
    <property type="evidence" value="ECO:0007669"/>
    <property type="project" value="TreeGrafter"/>
</dbReference>
<dbReference type="GO" id="GO:0019239">
    <property type="term" value="F:deaminase activity"/>
    <property type="evidence" value="ECO:0007669"/>
    <property type="project" value="TreeGrafter"/>
</dbReference>
<dbReference type="GO" id="GO:0019740">
    <property type="term" value="P:nitrogen utilization"/>
    <property type="evidence" value="ECO:0007669"/>
    <property type="project" value="UniProtKB-UniRule"/>
</dbReference>
<dbReference type="GO" id="GO:0006212">
    <property type="term" value="P:uracil catabolic process"/>
    <property type="evidence" value="ECO:0007669"/>
    <property type="project" value="UniProtKB-UniRule"/>
</dbReference>
<dbReference type="CDD" id="cd00448">
    <property type="entry name" value="YjgF_YER057c_UK114_family"/>
    <property type="match status" value="1"/>
</dbReference>
<dbReference type="Gene3D" id="3.30.1330.40">
    <property type="entry name" value="RutC-like"/>
    <property type="match status" value="1"/>
</dbReference>
<dbReference type="HAMAP" id="MF_00831">
    <property type="entry name" value="RutC"/>
    <property type="match status" value="1"/>
</dbReference>
<dbReference type="InterPro" id="IPR019898">
    <property type="entry name" value="RutC"/>
</dbReference>
<dbReference type="InterPro" id="IPR035959">
    <property type="entry name" value="RutC-like_sf"/>
</dbReference>
<dbReference type="InterPro" id="IPR006175">
    <property type="entry name" value="YjgF/YER057c/UK114"/>
</dbReference>
<dbReference type="NCBIfam" id="TIGR03610">
    <property type="entry name" value="RutC"/>
    <property type="match status" value="1"/>
</dbReference>
<dbReference type="PANTHER" id="PTHR11803">
    <property type="entry name" value="2-IMINOBUTANOATE/2-IMINOPROPANOATE DEAMINASE RIDA"/>
    <property type="match status" value="1"/>
</dbReference>
<dbReference type="PANTHER" id="PTHR11803:SF58">
    <property type="entry name" value="PROTEIN HMF1-RELATED"/>
    <property type="match status" value="1"/>
</dbReference>
<dbReference type="Pfam" id="PF01042">
    <property type="entry name" value="Ribonuc_L-PSP"/>
    <property type="match status" value="1"/>
</dbReference>
<dbReference type="SUPFAM" id="SSF55298">
    <property type="entry name" value="YjgF-like"/>
    <property type="match status" value="1"/>
</dbReference>
<comment type="function">
    <text evidence="1">Involved in pyrimidine catabolism. Catalyzes the deamination of 3-aminoacrylate to malonic semialdehyde, a reaction that can also occur spontaneously. RutC may facilitate the reaction and modulate the metabolic fitness, rather than catalyzing essential functions.</text>
</comment>
<comment type="catalytic activity">
    <reaction evidence="1">
        <text>(Z)-3-aminoacrylate + H2O + H(+) = 3-oxopropanoate + NH4(+)</text>
        <dbReference type="Rhea" id="RHEA:34947"/>
        <dbReference type="ChEBI" id="CHEBI:15377"/>
        <dbReference type="ChEBI" id="CHEBI:15378"/>
        <dbReference type="ChEBI" id="CHEBI:28938"/>
        <dbReference type="ChEBI" id="CHEBI:33190"/>
        <dbReference type="ChEBI" id="CHEBI:59894"/>
    </reaction>
</comment>
<comment type="similarity">
    <text evidence="1">Belongs to the RutC family.</text>
</comment>
<name>RUTC_RHIR8</name>
<reference key="1">
    <citation type="journal article" date="2009" name="J. Bacteriol.">
        <title>Genome sequences of three Agrobacterium biovars help elucidate the evolution of multichromosome genomes in bacteria.</title>
        <authorList>
            <person name="Slater S.C."/>
            <person name="Goldman B.S."/>
            <person name="Goodner B."/>
            <person name="Setubal J.C."/>
            <person name="Farrand S.K."/>
            <person name="Nester E.W."/>
            <person name="Burr T.J."/>
            <person name="Banta L."/>
            <person name="Dickerman A.W."/>
            <person name="Paulsen I."/>
            <person name="Otten L."/>
            <person name="Suen G."/>
            <person name="Welch R."/>
            <person name="Almeida N.F."/>
            <person name="Arnold F."/>
            <person name="Burton O.T."/>
            <person name="Du Z."/>
            <person name="Ewing A."/>
            <person name="Godsy E."/>
            <person name="Heisel S."/>
            <person name="Houmiel K.L."/>
            <person name="Jhaveri J."/>
            <person name="Lu J."/>
            <person name="Miller N.M."/>
            <person name="Norton S."/>
            <person name="Chen Q."/>
            <person name="Phoolcharoen W."/>
            <person name="Ohlin V."/>
            <person name="Ondrusek D."/>
            <person name="Pride N."/>
            <person name="Stricklin S.L."/>
            <person name="Sun J."/>
            <person name="Wheeler C."/>
            <person name="Wilson L."/>
            <person name="Zhu H."/>
            <person name="Wood D.W."/>
        </authorList>
    </citation>
    <scope>NUCLEOTIDE SEQUENCE [LARGE SCALE GENOMIC DNA]</scope>
    <source>
        <strain>K84 / ATCC BAA-868</strain>
    </source>
</reference>
<keyword id="KW-0378">Hydrolase</keyword>
<evidence type="ECO:0000255" key="1">
    <source>
        <dbReference type="HAMAP-Rule" id="MF_00831"/>
    </source>
</evidence>
<gene>
    <name evidence="1" type="primary">rutC</name>
    <name type="ordered locus">Arad_7071</name>
</gene>
<sequence length="129" mass="13779">MPKSIIVPAGTHKPIAPFSPGTLADGIVYVSGTLPFDKNNDVVHVGDAGAQTRHVLETIKSVIETAGGTMEDVTMNHIFVTDWANYQAVNAVYAEYFPGDKPARYCILCGLVKPDALVEIATVAHIGKK</sequence>
<organism>
    <name type="scientific">Rhizobium rhizogenes (strain K84 / ATCC BAA-868)</name>
    <name type="common">Agrobacterium radiobacter</name>
    <dbReference type="NCBI Taxonomy" id="311403"/>
    <lineage>
        <taxon>Bacteria</taxon>
        <taxon>Pseudomonadati</taxon>
        <taxon>Pseudomonadota</taxon>
        <taxon>Alphaproteobacteria</taxon>
        <taxon>Hyphomicrobiales</taxon>
        <taxon>Rhizobiaceae</taxon>
        <taxon>Rhizobium/Agrobacterium group</taxon>
        <taxon>Rhizobium</taxon>
    </lineage>
</organism>
<protein>
    <recommendedName>
        <fullName evidence="1">3-aminoacrylate deaminase RutC</fullName>
        <shortName evidence="1">3-AA deaminase</shortName>
        <ecNumber evidence="1">3.5.-.-</ecNumber>
    </recommendedName>
</protein>